<sequence length="192" mass="20914">MGSCECPALLLLLSLLLLPLGLPVLGAPPRLICDSRVLERYILGAREAENVTMGCAEGCSFSENITVPDTKVNFYTWKRMDVGQQAVEVWQGLALLSEAILRGQALLANSSQPSETLQLHVDKAVSSLRSLTSLLRALGAQKEATSLPEATSAAPLRTFTVDTLCKLFRIYSNFLRGKLTLYTGEACRRGDR</sequence>
<organism>
    <name type="scientific">Felis catus</name>
    <name type="common">Cat</name>
    <name type="synonym">Felis silvestris catus</name>
    <dbReference type="NCBI Taxonomy" id="9685"/>
    <lineage>
        <taxon>Eukaryota</taxon>
        <taxon>Metazoa</taxon>
        <taxon>Chordata</taxon>
        <taxon>Craniata</taxon>
        <taxon>Vertebrata</taxon>
        <taxon>Euteleostomi</taxon>
        <taxon>Mammalia</taxon>
        <taxon>Eutheria</taxon>
        <taxon>Laurasiatheria</taxon>
        <taxon>Carnivora</taxon>
        <taxon>Feliformia</taxon>
        <taxon>Felidae</taxon>
        <taxon>Felinae</taxon>
        <taxon>Felis</taxon>
    </lineage>
</organism>
<protein>
    <recommendedName>
        <fullName>Erythropoietin</fullName>
    </recommendedName>
</protein>
<comment type="function">
    <text evidence="2">Hormone involved in the regulation of erythrocyte proliferation and differentiation and the maintenance of a physiological level of circulating erythrocyte mass. Binds to EPOR leading to EPOR dimerization and JAK2 activation thereby activating specific downstream effectors, including STAT1 and STAT3.</text>
</comment>
<comment type="subcellular location">
    <subcellularLocation>
        <location>Secreted</location>
    </subcellularLocation>
</comment>
<comment type="tissue specificity">
    <text>Produced by kidney or liver of adult mammals and by liver of fetal or neonatal mammals.</text>
</comment>
<comment type="similarity">
    <text evidence="4">Belongs to the EPO/TPO family.</text>
</comment>
<reference key="1">
    <citation type="submission" date="1993-11" db="EMBL/GenBank/DDBJ databases">
        <title>A feline erythropoietin cDNA, cloned by RT/PCR amplification of kidney derived RNA with hybrid (human/mouse) primers.</title>
        <authorList>
            <person name="Goodman R.E."/>
            <person name="Bell R.G."/>
        </authorList>
    </citation>
    <scope>NUCLEOTIDE SEQUENCE [MRNA]</scope>
    <source>
        <tissue>Kidney</tissue>
    </source>
</reference>
<reference key="2">
    <citation type="journal article" date="1993" name="Blood">
        <title>Erythropoietin structure-function relationships: high degree of sequence homology among mammals.</title>
        <authorList>
            <person name="Wen D."/>
            <person name="Boissel J.-P.R."/>
            <person name="Tracy T.E."/>
            <person name="Gruninger R.H."/>
            <person name="Mulcahy L.S."/>
            <person name="Czelusniak J."/>
            <person name="Goodman M."/>
            <person name="Bunn H.F."/>
        </authorList>
    </citation>
    <scope>NUCLEOTIDE SEQUENCE [MRNA] OF 5-192</scope>
</reference>
<gene>
    <name type="primary">EPO</name>
</gene>
<name>EPO_FELCA</name>
<accession>P33708</accession>
<evidence type="ECO:0000250" key="1"/>
<evidence type="ECO:0000250" key="2">
    <source>
        <dbReference type="UniProtKB" id="P01588"/>
    </source>
</evidence>
<evidence type="ECO:0000255" key="3"/>
<evidence type="ECO:0000305" key="4"/>
<dbReference type="EMBL" id="U00685">
    <property type="protein sequence ID" value="AAA18282.1"/>
    <property type="molecule type" value="mRNA"/>
</dbReference>
<dbReference type="EMBL" id="L10606">
    <property type="protein sequence ID" value="AAA30807.1"/>
    <property type="molecule type" value="mRNA"/>
</dbReference>
<dbReference type="PIR" id="I46083">
    <property type="entry name" value="I46083"/>
</dbReference>
<dbReference type="RefSeq" id="NP_001009269.1">
    <property type="nucleotide sequence ID" value="NM_001009269.1"/>
</dbReference>
<dbReference type="SMR" id="P33708"/>
<dbReference type="FunCoup" id="P33708">
    <property type="interactions" value="48"/>
</dbReference>
<dbReference type="STRING" id="9685.ENSFCAP00000006359"/>
<dbReference type="GlyCosmos" id="P33708">
    <property type="glycosylation" value="3 sites, No reported glycans"/>
</dbReference>
<dbReference type="PaxDb" id="9685-ENSFCAP00000006359"/>
<dbReference type="GeneID" id="493801"/>
<dbReference type="KEGG" id="fca:493801"/>
<dbReference type="CTD" id="2056"/>
<dbReference type="eggNOG" id="ENOG502RXRC">
    <property type="taxonomic scope" value="Eukaryota"/>
</dbReference>
<dbReference type="HOGENOM" id="CLU_110946_0_0_1"/>
<dbReference type="InParanoid" id="P33708"/>
<dbReference type="OrthoDB" id="9892121at2759"/>
<dbReference type="TreeFam" id="TF333413"/>
<dbReference type="Proteomes" id="UP000011712">
    <property type="component" value="Unplaced"/>
</dbReference>
<dbReference type="GO" id="GO:0005615">
    <property type="term" value="C:extracellular space"/>
    <property type="evidence" value="ECO:0000318"/>
    <property type="project" value="GO_Central"/>
</dbReference>
<dbReference type="GO" id="GO:0005125">
    <property type="term" value="F:cytokine activity"/>
    <property type="evidence" value="ECO:0000318"/>
    <property type="project" value="GO_Central"/>
</dbReference>
<dbReference type="GO" id="GO:0005128">
    <property type="term" value="F:erythropoietin receptor binding"/>
    <property type="evidence" value="ECO:0000250"/>
    <property type="project" value="UniProtKB"/>
</dbReference>
<dbReference type="GO" id="GO:0005179">
    <property type="term" value="F:hormone activity"/>
    <property type="evidence" value="ECO:0007669"/>
    <property type="project" value="UniProtKB-KW"/>
</dbReference>
<dbReference type="GO" id="GO:0030295">
    <property type="term" value="F:protein kinase activator activity"/>
    <property type="evidence" value="ECO:0000318"/>
    <property type="project" value="GO_Central"/>
</dbReference>
<dbReference type="GO" id="GO:0030218">
    <property type="term" value="P:erythrocyte differentiation"/>
    <property type="evidence" value="ECO:0000250"/>
    <property type="project" value="UniProtKB"/>
</dbReference>
<dbReference type="GO" id="GO:0043249">
    <property type="term" value="P:erythrocyte maturation"/>
    <property type="evidence" value="ECO:0007669"/>
    <property type="project" value="UniProtKB-KW"/>
</dbReference>
<dbReference type="GO" id="GO:0038162">
    <property type="term" value="P:erythropoietin-mediated signaling pathway"/>
    <property type="evidence" value="ECO:0000250"/>
    <property type="project" value="UniProtKB"/>
</dbReference>
<dbReference type="GO" id="GO:0008284">
    <property type="term" value="P:positive regulation of cell population proliferation"/>
    <property type="evidence" value="ECO:0000318"/>
    <property type="project" value="GO_Central"/>
</dbReference>
<dbReference type="GO" id="GO:0046579">
    <property type="term" value="P:positive regulation of Ras protein signal transduction"/>
    <property type="evidence" value="ECO:0000318"/>
    <property type="project" value="GO_Central"/>
</dbReference>
<dbReference type="FunFam" id="1.20.1250.10:FF:000013">
    <property type="entry name" value="Erythropoietin"/>
    <property type="match status" value="1"/>
</dbReference>
<dbReference type="Gene3D" id="1.20.1250.10">
    <property type="match status" value="1"/>
</dbReference>
<dbReference type="InterPro" id="IPR009079">
    <property type="entry name" value="4_helix_cytokine-like_core"/>
</dbReference>
<dbReference type="InterPro" id="IPR019767">
    <property type="entry name" value="EPO/TPO_CS"/>
</dbReference>
<dbReference type="InterPro" id="IPR001323">
    <property type="entry name" value="EPO_TPO"/>
</dbReference>
<dbReference type="InterPro" id="IPR003013">
    <property type="entry name" value="Erythroptn"/>
</dbReference>
<dbReference type="PANTHER" id="PTHR10370">
    <property type="entry name" value="ERYTHROPOIETIN"/>
    <property type="match status" value="1"/>
</dbReference>
<dbReference type="PANTHER" id="PTHR10370:SF0">
    <property type="entry name" value="ERYTHROPOIETIN"/>
    <property type="match status" value="1"/>
</dbReference>
<dbReference type="Pfam" id="PF00758">
    <property type="entry name" value="EPO_TPO"/>
    <property type="match status" value="1"/>
</dbReference>
<dbReference type="PIRSF" id="PIRSF001951">
    <property type="entry name" value="EPO"/>
    <property type="match status" value="1"/>
</dbReference>
<dbReference type="PRINTS" id="PR00272">
    <property type="entry name" value="ERYTHROPTN"/>
</dbReference>
<dbReference type="SUPFAM" id="SSF47266">
    <property type="entry name" value="4-helical cytokines"/>
    <property type="match status" value="1"/>
</dbReference>
<dbReference type="PROSITE" id="PS00817">
    <property type="entry name" value="EPO_TPO"/>
    <property type="match status" value="1"/>
</dbReference>
<feature type="signal peptide" evidence="1">
    <location>
        <begin position="1"/>
        <end position="26"/>
    </location>
</feature>
<feature type="chain" id="PRO_0000008399" description="Erythropoietin">
    <location>
        <begin position="27"/>
        <end position="192"/>
    </location>
</feature>
<feature type="glycosylation site" description="N-linked (GlcNAc...) asparagine" evidence="3">
    <location>
        <position position="50"/>
    </location>
</feature>
<feature type="glycosylation site" description="N-linked (GlcNAc...) asparagine" evidence="3">
    <location>
        <position position="64"/>
    </location>
</feature>
<feature type="glycosylation site" description="N-linked (GlcNAc...) asparagine" evidence="3">
    <location>
        <position position="109"/>
    </location>
</feature>
<feature type="disulfide bond" evidence="1">
    <location>
        <begin position="33"/>
        <end position="187"/>
    </location>
</feature>
<feature type="disulfide bond" evidence="1">
    <location>
        <begin position="55"/>
        <end position="59"/>
    </location>
</feature>
<feature type="sequence conflict" description="In Ref. 2; AAA30807." evidence="4" ref="2">
    <original>G</original>
    <variation>E</variation>
    <location>
        <position position="44"/>
    </location>
</feature>
<keyword id="KW-1015">Disulfide bond</keyword>
<keyword id="KW-0265">Erythrocyte maturation</keyword>
<keyword id="KW-0325">Glycoprotein</keyword>
<keyword id="KW-0372">Hormone</keyword>
<keyword id="KW-1185">Reference proteome</keyword>
<keyword id="KW-0964">Secreted</keyword>
<keyword id="KW-0732">Signal</keyword>
<proteinExistence type="evidence at transcript level"/>